<sequence>MEKYREIHRDLQSFPVGSLTAVECIDYLDRLYAIRHDIVDQMIKHDWSDNKDSEESIGKVLLFAGVPNNVITAMEKKIIPDHPSGKTLRSFFKMTPDNYKITGSTIEFVEVTVTVDVDKGIREKRLKYEAGLKYIEQELHNHFLRGDIPQPYKITFQVVSVRTDGSNISTQWPSRRNDGVVQYMRLVQAEISYVREHLIRQEERAALEAMFNLKFNISNIKNQPYYIPDYRGIPLIHPNINDLVVYMRDWLSKSHKFSFHEGKVPAVFDCFNENELEHAVKYPISRHPRNFLLIQCSLLSSYNPATILSDQVDSRRACNSVLNLIPETPTSFLIHDMAYRYINLTREDMVSFYAPKTQFIPTQNVKEPGTFKLTANSMRPESKAMLDMLGSHEPGEKKGALIESLNLSSHIVQSECVSLITKILSDLELNISEPTSHGSFTTKHTYVDNVLEKFFQNEIQRYLLDVLKKTTAWHIGHLIRDITESLIAHSGLKRSKYWSVHAYNNGNVILFILPSKSLEVAGSYIRFVTVFRMGPGLVDKDNLDTILTDQDVTWGVSKVMSIDLNRLLALNIAFEKALIATATWFQYYTEDQGQFPLQHAIRSVFAYHLLLAVCQKMKLCAIFDNLRYLIPAVTSLYSGFPSLINKLFERPFKSALEVYVYYNIKSLLVALAQNNKARFYSKVKLLGLTVDQSTVGASGIYPSFMSRVIYKHYRSLISEVTTCFFLFEKGLHGNMNEEAKIHLETVEWALKFRQKEDQYGESMVENGYTIGELNDNQDLVEQQLYCQDAVELAAVELNKILSTKSQVVANSILNKYWEVPYFSQTRNISLKGMSGQVQEDGHLAASVTIIEAIRYLSSSQNNPSVLQLYEETRKVKAQARIVRKYQRTEADRGFFITTLPTRCRLEIIEDYYDAISKNVAEEYISYGGERKILCIQSALEKALRWASGESFIELSNGKFIRMKRKLMYVSADATKWSPGDNSAKFRRFTAALHNGLPDDRLKNCVIDALRNVYKTDFYMSRKLRAYIDNMNGHEPAVKNFLEFFPDGHCGEVRGNWLQGNLNKCSSLFGVGMSLLFKQLWNELFPELDCFFEFAHHSDDALFIYGYLEPIDDGTDWFLYVSQQIQAGHLHWFSVNTEMWKSMFNLHEHVLLLGSIKISPKKTTLSPTNAEFLSTFFESCAVSIPFIKILLGSLSDLPGLGYFDDLAAAQSRCVKAMDLGASPQVAQLAVALCTNKVERLYGTAVGMIKHPSTYLQVKHGDTPIPLGGSGAMSIMELATAGIGMSDKNLLKRALLGYIHKRQKNMAYILGLFKFLMNLSKDTFQHERLGEFSFIGKVQWKIFIPKSEFEFFDMYTPKFLKLWSEQHVTYDYIIPKGRDNLLIYLVRKINDPSIVTAMTMQSPLQLRFRMQAKQHMKVCKLDDDWVTFREILAAANSFAQLYEVTQEDLDLFQTLTSCTFSKEYAWKDFLNGVQCDVIPTKQIQRAKVARTFTVREKDQIIQNSIPAVIGYKFAVTVDEMSDVLDSAKFPDSLAVDLKTMKDGVYRELGLDISQAEVMKKVAPMLYKSSKSRVVIVQGNVEGTAEAICGYWLRTMSLVKTIRVKPHKEVLKAVSIFNRKEDIGQQKDLAALRLCIEVWRWCKANNAPYQEWFHALWFEDKTFSEWLDRFIRVGVPPVDPEIQCAALMIADIRGDLSVLQVQANRRAYSGKQYDAYCVQTYNEETKLYEGDLRVTFNFGLDCARLEIFWDKQTYILETSITQKHVLKIMMDEVTKELLRCGMRFKTEQVSNVKHLVLFKTEAGFEWGKPNIPCIVYKNCALRTGLRANQTVNHKFMISIKDNGLRAIAQYDDESPRFLLAHAFHTIRDIRYQAVDAVSNVWFIHKGIKLFLNPIISSGLLENFMKNLPAAIPPAAYSLIMNRAKISVDLFMFNDLLRLINPSNTLDLSGLQPTEDGFSTVSSMSSRLWSEEVSFVDEDEEIDDEFTIDLQDVDFENIDVEADIEHFLQDESSYTGDLLIMSEETEVKKMRGIIKLLEPVRLIKSWVSKGLCIEKVYSPTNIILMTRYLSKNFNFSGRQVSLLDPYDLTEFESIVKGWGECVVDQFSTFDQETQLLVSQKGICPEDVVPDSLFSFRHTIVLLRRLFPQDSVSTFY</sequence>
<evidence type="ECO:0000250" key="1">
    <source>
        <dbReference type="UniProtKB" id="A2SZS3"/>
    </source>
</evidence>
<evidence type="ECO:0000250" key="2">
    <source>
        <dbReference type="UniProtKB" id="I0DF35"/>
    </source>
</evidence>
<evidence type="ECO:0000250" key="3">
    <source>
        <dbReference type="UniProtKB" id="P23456"/>
    </source>
</evidence>
<evidence type="ECO:0000250" key="4">
    <source>
        <dbReference type="UniProtKB" id="Q89709"/>
    </source>
</evidence>
<evidence type="ECO:0000250" key="5">
    <source>
        <dbReference type="UniProtKB" id="Q9E005"/>
    </source>
</evidence>
<evidence type="ECO:0000250" key="6">
    <source>
        <dbReference type="UniProtKB" id="Q9YQR5"/>
    </source>
</evidence>
<evidence type="ECO:0000255" key="7">
    <source>
        <dbReference type="PROSITE-ProRule" id="PRU00539"/>
    </source>
</evidence>
<evidence type="ECO:0000269" key="8">
    <source>
    </source>
</evidence>
<evidence type="ECO:0000303" key="9">
    <source>
    </source>
</evidence>
<evidence type="ECO:0000305" key="10"/>
<evidence type="ECO:0000312" key="11">
    <source>
        <dbReference type="EMBL" id="CAC85167.1"/>
    </source>
</evidence>
<protein>
    <recommendedName>
        <fullName>RNA-directed RNA polymerase L</fullName>
        <shortName>Protein L</shortName>
        <ecNumber evidence="7">2.7.7.48</ecNumber>
    </recommendedName>
    <alternativeName>
        <fullName>Large structural protein</fullName>
    </alternativeName>
    <alternativeName>
        <fullName evidence="10">RdRp</fullName>
    </alternativeName>
    <alternativeName>
        <fullName>Replicase</fullName>
    </alternativeName>
    <alternativeName>
        <fullName>Transcriptase</fullName>
    </alternativeName>
    <domain>
        <recommendedName>
            <fullName>cap-snatching endonuclease</fullName>
            <ecNumber evidence="3">3.1.-.-</ecNumber>
        </recommendedName>
    </domain>
</protein>
<keyword id="KW-1157">Cap snatching</keyword>
<keyword id="KW-0255">Endonuclease</keyword>
<keyword id="KW-1035">Host cytoplasm</keyword>
<keyword id="KW-0378">Hydrolase</keyword>
<keyword id="KW-0460">Magnesium</keyword>
<keyword id="KW-0464">Manganese</keyword>
<keyword id="KW-0479">Metal-binding</keyword>
<keyword id="KW-0540">Nuclease</keyword>
<keyword id="KW-0547">Nucleotide-binding</keyword>
<keyword id="KW-0548">Nucleotidyltransferase</keyword>
<keyword id="KW-0696">RNA-directed RNA polymerase</keyword>
<keyword id="KW-0808">Transferase</keyword>
<keyword id="KW-0693">Viral RNA replication</keyword>
<gene>
    <name evidence="11" type="primary">L</name>
</gene>
<organismHost>
    <name type="scientific">Apodemus agrarius</name>
    <name type="common">Eurasian field mouse</name>
    <dbReference type="NCBI Taxonomy" id="39030"/>
</organismHost>
<organismHost>
    <name type="scientific">Apodemus flavicollis</name>
    <name type="common">Yellow-necked field mouse</name>
    <dbReference type="NCBI Taxonomy" id="54292"/>
</organismHost>
<organismHost>
    <name type="scientific">Apodemus ponticus</name>
    <name type="common">Caucasus field mouse</name>
    <dbReference type="NCBI Taxonomy" id="134909"/>
</organismHost>
<organismHost>
    <name type="scientific">Homo sapiens</name>
    <name type="common">Human</name>
    <dbReference type="NCBI Taxonomy" id="9606"/>
</organismHost>
<reference key="1">
    <citation type="journal article" date="2002" name="Virus Res.">
        <title>Phylogenetic evidence for host switching in the evolution of hantaviruses carried by Apodemus mice.</title>
        <authorList>
            <person name="Nemirov K."/>
            <person name="Hentonnen H."/>
            <person name="Vaheri A."/>
            <person name="Plyusnin A."/>
        </authorList>
    </citation>
    <scope>NUCLEOTIDE SEQUENCE [GENOMIC RNA]</scope>
    <source>
        <strain>DOBV/Ano-Poroia/Afl9/1999</strain>
    </source>
</reference>
<reference key="2">
    <citation type="journal article" date="2003" name="J. Med. Virol.">
        <title>Genetic characterization of new Dobrava hantavirus isolate from Greece.</title>
        <authorList>
            <person name="Nemirov K."/>
            <person name="Vapalahti O."/>
            <person name="Papa A."/>
            <person name="Plyusnina A."/>
            <person name="Lundkvist A."/>
            <person name="Antoniadis A."/>
            <person name="Plyusnin A."/>
        </authorList>
    </citation>
    <scope>NUCLEOTIDE SEQUENCE [GENOMIC RNA]</scope>
    <source>
        <strain>DOBV/Ano-Poroia/Afl9/1999</strain>
    </source>
</reference>
<reference key="3">
    <citation type="journal article" date="2005" name="Arch. Virol.">
        <title>L protein, the RNA-dependent RNA polymerase of hantaviruses.</title>
        <authorList>
            <person name="Kukkonen S.K."/>
            <person name="Vaheri A."/>
            <person name="Plyusnin A."/>
        </authorList>
    </citation>
    <scope>REVIEW</scope>
</reference>
<reference key="4">
    <citation type="journal article" date="2017" name="Crit. Rev. Microbiol.">
        <title>Bunyaviridae RdRps: structure, motifs, and RNA synthesis machinery.</title>
        <authorList>
            <person name="Amroun A."/>
            <person name="Priet S."/>
            <person name="de Lamballerie X."/>
            <person name="Querat G."/>
        </authorList>
    </citation>
    <scope>REVIEW</scope>
</reference>
<reference key="5">
    <citation type="journal article" date="2020" name="Trends Microbiol.">
        <title>The Cap-Snatching Mechanism of Bunyaviruses.</title>
        <authorList>
            <person name="Olschewski S."/>
            <person name="Cusack S."/>
            <person name="Rosenthal M."/>
        </authorList>
    </citation>
    <scope>REVIEW</scope>
</reference>
<accession>Q806Y6</accession>
<organism>
    <name type="scientific">Dobrava-Belgrade orthohantavirus</name>
    <name type="common">DOBV</name>
    <name type="synonym">Dobrava virus</name>
    <dbReference type="NCBI Taxonomy" id="3052477"/>
    <lineage>
        <taxon>Viruses</taxon>
        <taxon>Riboviria</taxon>
        <taxon>Orthornavirae</taxon>
        <taxon>Negarnaviricota</taxon>
        <taxon>Polyploviricotina</taxon>
        <taxon>Ellioviricetes</taxon>
        <taxon>Bunyavirales</taxon>
        <taxon>Hantaviridae</taxon>
        <taxon>Mammantavirinae</taxon>
        <taxon>Orthohantavirus</taxon>
    </lineage>
</organism>
<proteinExistence type="inferred from homology"/>
<feature type="chain" id="PRO_0000455191" description="RNA-directed RNA polymerase L">
    <location>
        <begin position="1"/>
        <end position="2151"/>
    </location>
</feature>
<feature type="domain" description="RdRp catalytic" evidence="7">
    <location>
        <begin position="956"/>
        <end position="1142"/>
    </location>
</feature>
<feature type="active site" description="For endonuclease activity" evidence="3">
    <location>
        <position position="124"/>
    </location>
</feature>
<feature type="binding site" evidence="5">
    <location>
        <position position="36"/>
    </location>
    <ligand>
        <name>Mn(2+)</name>
        <dbReference type="ChEBI" id="CHEBI:29035"/>
        <label>1</label>
    </ligand>
</feature>
<feature type="binding site" evidence="3">
    <location>
        <position position="54"/>
    </location>
    <ligand>
        <name>Mn(2+)</name>
        <dbReference type="ChEBI" id="CHEBI:29035"/>
        <label>2</label>
    </ligand>
</feature>
<feature type="binding site" evidence="5">
    <location>
        <position position="97"/>
    </location>
    <ligand>
        <name>Mn(2+)</name>
        <dbReference type="ChEBI" id="CHEBI:29035"/>
        <label>1</label>
    </ligand>
</feature>
<feature type="binding site" evidence="5">
    <location>
        <position position="97"/>
    </location>
    <ligand>
        <name>Mn(2+)</name>
        <dbReference type="ChEBI" id="CHEBI:29035"/>
        <label>2</label>
    </ligand>
</feature>
<feature type="binding site" evidence="5">
    <location>
        <position position="110"/>
    </location>
    <ligand>
        <name>Mn(2+)</name>
        <dbReference type="ChEBI" id="CHEBI:29035"/>
        <label>1</label>
    </ligand>
</feature>
<feature type="binding site" evidence="5">
    <location>
        <position position="111"/>
    </location>
    <ligand>
        <name>Mn(2+)</name>
        <dbReference type="ChEBI" id="CHEBI:29035"/>
        <label>1</label>
    </ligand>
</feature>
<feature type="binding site" evidence="2">
    <location>
        <position position="1099"/>
    </location>
    <ligand>
        <name>Mg(2+)</name>
        <dbReference type="ChEBI" id="CHEBI:18420"/>
        <note>catalytic; for RdRp activity</note>
    </ligand>
</feature>
<comment type="function">
    <text evidence="5">RNA-dependent RNA polymerase, which is responsible for the replication and transcription of the viral RNA genome using antigenomic RNA as an intermediate (By similarity). During transcription, synthesizes subgenomic RNAs and assures their capping by a cap-snatching mechanism, which involves the endonuclease activity cleaving the host capped pre-mRNAs. These short capped RNAs are then used as primers for viral transcription. Cleaves ssRNA substrates but not DNA (By similarity). Seems to downregulate the expression of its own and heterologous mRNAs through its endonuclease activity (By similarity).</text>
</comment>
<comment type="catalytic activity">
    <reaction evidence="7">
        <text>RNA(n) + a ribonucleoside 5'-triphosphate = RNA(n+1) + diphosphate</text>
        <dbReference type="Rhea" id="RHEA:21248"/>
        <dbReference type="Rhea" id="RHEA-COMP:14527"/>
        <dbReference type="Rhea" id="RHEA-COMP:17342"/>
        <dbReference type="ChEBI" id="CHEBI:33019"/>
        <dbReference type="ChEBI" id="CHEBI:61557"/>
        <dbReference type="ChEBI" id="CHEBI:140395"/>
        <dbReference type="EC" id="2.7.7.48"/>
    </reaction>
</comment>
<comment type="cofactor">
    <cofactor evidence="3">
        <name>Mn(2+)</name>
        <dbReference type="ChEBI" id="CHEBI:29035"/>
    </cofactor>
    <text evidence="3 8">For endonuclease activity. Binds 2 Mn2+ ions in the active site. The divalent metal ions are crucial for catalytic activity (PubMed:31948728).</text>
</comment>
<comment type="cofactor">
    <cofactor evidence="1">
        <name>Mg(2+)</name>
        <dbReference type="ChEBI" id="CHEBI:18420"/>
    </cofactor>
    <cofactor evidence="1">
        <name>Mn(2+)</name>
        <dbReference type="ChEBI" id="CHEBI:29035"/>
    </cofactor>
    <text evidence="1">For polymerase activity.</text>
</comment>
<comment type="subunit">
    <text evidence="4">Interacts with the viral nucleoprotein.</text>
</comment>
<comment type="subcellular location">
    <subcellularLocation>
        <location evidence="6">Host cytoplasm</location>
        <location evidence="6">Host perinuclear region</location>
    </subcellularLocation>
</comment>
<comment type="domain">
    <text evidence="1 2 5">The N-terminus contains the endonuclease activity (endoN) (By similarity). The central region contains the RdRp activity (By similarity). The C-terminus contains the cap-binding region (By similarity).</text>
</comment>
<comment type="miscellaneous">
    <text evidence="9">Classified as His(+) endonuclease since it has a histidine upstream of the active site that coordinates the first cation.</text>
</comment>
<comment type="similarity">
    <text evidence="10">Belongs to the Bunyavirales RNA polymerase family.</text>
</comment>
<dbReference type="EC" id="2.7.7.48" evidence="7"/>
<dbReference type="EC" id="3.1.-.-" evidence="3"/>
<dbReference type="EMBL" id="AJ410617">
    <property type="protein sequence ID" value="CAC85167.1"/>
    <property type="molecule type" value="Genomic_RNA"/>
</dbReference>
<dbReference type="SMR" id="Q806Y6"/>
<dbReference type="KEGG" id="vg:2656265"/>
<dbReference type="Proteomes" id="UP000202548">
    <property type="component" value="Genome"/>
</dbReference>
<dbReference type="GO" id="GO:0044220">
    <property type="term" value="C:host cell perinuclear region of cytoplasm"/>
    <property type="evidence" value="ECO:0007669"/>
    <property type="project" value="UniProtKB-SubCell"/>
</dbReference>
<dbReference type="GO" id="GO:0004519">
    <property type="term" value="F:endonuclease activity"/>
    <property type="evidence" value="ECO:0007669"/>
    <property type="project" value="UniProtKB-KW"/>
</dbReference>
<dbReference type="GO" id="GO:0046872">
    <property type="term" value="F:metal ion binding"/>
    <property type="evidence" value="ECO:0007669"/>
    <property type="project" value="UniProtKB-KW"/>
</dbReference>
<dbReference type="GO" id="GO:0000166">
    <property type="term" value="F:nucleotide binding"/>
    <property type="evidence" value="ECO:0007669"/>
    <property type="project" value="UniProtKB-KW"/>
</dbReference>
<dbReference type="GO" id="GO:0003968">
    <property type="term" value="F:RNA-directed RNA polymerase activity"/>
    <property type="evidence" value="ECO:0007669"/>
    <property type="project" value="UniProtKB-KW"/>
</dbReference>
<dbReference type="GO" id="GO:0075526">
    <property type="term" value="P:cap snatching"/>
    <property type="evidence" value="ECO:0007669"/>
    <property type="project" value="UniProtKB-KW"/>
</dbReference>
<dbReference type="GO" id="GO:0006351">
    <property type="term" value="P:DNA-templated transcription"/>
    <property type="evidence" value="ECO:0007669"/>
    <property type="project" value="InterPro"/>
</dbReference>
<dbReference type="GO" id="GO:0039694">
    <property type="term" value="P:viral RNA genome replication"/>
    <property type="evidence" value="ECO:0007669"/>
    <property type="project" value="InterPro"/>
</dbReference>
<dbReference type="InterPro" id="IPR048006">
    <property type="entry name" value="CapSnatch_bunyavir"/>
</dbReference>
<dbReference type="InterPro" id="IPR054155">
    <property type="entry name" value="CapSnatchArena_N"/>
</dbReference>
<dbReference type="InterPro" id="IPR016268">
    <property type="entry name" value="RNA-dir_pol_hantavirus"/>
</dbReference>
<dbReference type="InterPro" id="IPR024378">
    <property type="entry name" value="RNA-dir_pol_N_hantavirus"/>
</dbReference>
<dbReference type="InterPro" id="IPR007099">
    <property type="entry name" value="RNA-dir_pol_NSvirus"/>
</dbReference>
<dbReference type="InterPro" id="IPR007322">
    <property type="entry name" value="RNA_pol_bunyavir"/>
</dbReference>
<dbReference type="NCBIfam" id="TIGR04202">
    <property type="entry name" value="capSnatchArena"/>
    <property type="match status" value="1"/>
</dbReference>
<dbReference type="Pfam" id="PF04196">
    <property type="entry name" value="Bunya_RdRp"/>
    <property type="match status" value="1"/>
</dbReference>
<dbReference type="Pfam" id="PF21991">
    <property type="entry name" value="capSnatchArena"/>
    <property type="match status" value="1"/>
</dbReference>
<dbReference type="Pfam" id="PF12426">
    <property type="entry name" value="DUF3674"/>
    <property type="match status" value="1"/>
</dbReference>
<dbReference type="PIRSF" id="PIRSF000825">
    <property type="entry name" value="L_HantaV"/>
    <property type="match status" value="1"/>
</dbReference>
<dbReference type="PROSITE" id="PS50525">
    <property type="entry name" value="RDRP_SSRNA_NEG_SEG"/>
    <property type="match status" value="1"/>
</dbReference>
<name>L_DOBV</name>